<keyword id="KW-0008">Acetylcholine receptor inhibiting toxin</keyword>
<keyword id="KW-1015">Disulfide bond</keyword>
<keyword id="KW-0872">Ion channel impairing toxin</keyword>
<keyword id="KW-0528">Neurotoxin</keyword>
<keyword id="KW-0629">Postsynaptic neurotoxin</keyword>
<keyword id="KW-0964">Secreted</keyword>
<keyword id="KW-0800">Toxin</keyword>
<protein>
    <recommendedName>
        <fullName evidence="4">Alpha-conotoxin-like Leo-A1</fullName>
    </recommendedName>
</protein>
<organism>
    <name type="scientific">Conus leopardus</name>
    <name type="common">Leopard cone</name>
    <dbReference type="NCBI Taxonomy" id="101306"/>
    <lineage>
        <taxon>Eukaryota</taxon>
        <taxon>Metazoa</taxon>
        <taxon>Spiralia</taxon>
        <taxon>Lophotrochozoa</taxon>
        <taxon>Mollusca</taxon>
        <taxon>Gastropoda</taxon>
        <taxon>Caenogastropoda</taxon>
        <taxon>Neogastropoda</taxon>
        <taxon>Conoidea</taxon>
        <taxon>Conidae</taxon>
        <taxon>Conus</taxon>
        <taxon>Lithoconus</taxon>
    </lineage>
</organism>
<accession>P0C901</accession>
<sequence length="43" mass="4461">LTLDRASDDTDVAAEIMSGLIALAIDSCCSDSDCNANHPDMCS</sequence>
<dbReference type="EMBL" id="EF467320">
    <property type="status" value="NOT_ANNOTATED_CDS"/>
    <property type="molecule type" value="Genomic_DNA"/>
</dbReference>
<dbReference type="TCDB" id="8.B.32.1.8">
    <property type="family name" value="the nicotinic acetylcholine receptor-targeting alpha-conotoxin (a-conotoxin) family"/>
</dbReference>
<dbReference type="ConoServer" id="3724">
    <property type="toxin name" value="Lp1.11 precursor"/>
</dbReference>
<dbReference type="GO" id="GO:0005576">
    <property type="term" value="C:extracellular region"/>
    <property type="evidence" value="ECO:0007669"/>
    <property type="project" value="UniProtKB-SubCell"/>
</dbReference>
<dbReference type="GO" id="GO:0035792">
    <property type="term" value="C:host cell postsynaptic membrane"/>
    <property type="evidence" value="ECO:0007669"/>
    <property type="project" value="UniProtKB-KW"/>
</dbReference>
<dbReference type="GO" id="GO:0030550">
    <property type="term" value="F:acetylcholine receptor inhibitor activity"/>
    <property type="evidence" value="ECO:0007669"/>
    <property type="project" value="UniProtKB-KW"/>
</dbReference>
<dbReference type="GO" id="GO:0099106">
    <property type="term" value="F:ion channel regulator activity"/>
    <property type="evidence" value="ECO:0007669"/>
    <property type="project" value="UniProtKB-KW"/>
</dbReference>
<dbReference type="GO" id="GO:0090729">
    <property type="term" value="F:toxin activity"/>
    <property type="evidence" value="ECO:0007669"/>
    <property type="project" value="UniProtKB-KW"/>
</dbReference>
<dbReference type="InterPro" id="IPR009958">
    <property type="entry name" value="Conotoxin_a-typ"/>
</dbReference>
<dbReference type="Pfam" id="PF07365">
    <property type="entry name" value="Toxin_8"/>
    <property type="match status" value="1"/>
</dbReference>
<reference key="1">
    <citation type="journal article" date="2008" name="Mol. Ecol.">
        <title>Evolution of ecological specialization and venom of a predatory marine gastropod.</title>
        <authorList>
            <person name="Remigio E.A."/>
            <person name="Duda T.F. Jr."/>
        </authorList>
    </citation>
    <scope>NUCLEOTIDE SEQUENCE [GENOMIC DNA]</scope>
</reference>
<proteinExistence type="inferred from homology"/>
<feature type="propeptide" id="PRO_0000368001" evidence="5">
    <location>
        <begin position="1"/>
        <end position="26"/>
    </location>
</feature>
<feature type="peptide" id="PRO_0000368002" description="Alpha-conotoxin-like Leo-A1" evidence="3">
    <location>
        <begin position="26"/>
        <end position="43"/>
    </location>
</feature>
<feature type="region of interest" description="Lacks the Ser-Xaa-Pro motif that is crucial for potent interaction with nAChR" evidence="5">
    <location>
        <begin position="30"/>
        <end position="32"/>
    </location>
</feature>
<feature type="disulfide bond" evidence="1">
    <location>
        <begin position="28"/>
        <end position="34"/>
    </location>
</feature>
<feature type="disulfide bond" evidence="1">
    <location>
        <begin position="29"/>
        <end position="42"/>
    </location>
</feature>
<comment type="function">
    <text evidence="2">Alpha-conotoxins act on postsynaptic membranes, they bind to the nicotinic acetylcholine receptors (nAChR) and thus inhibit them (By similarity). Has possibly a distinct nAChR binding mode from other alpha-conotoxins, due to a different three residue motif (lacks the Ser-Xaa-Pro motif) (By similarity).</text>
</comment>
<comment type="subcellular location">
    <subcellularLocation>
        <location evidence="6">Secreted</location>
    </subcellularLocation>
</comment>
<comment type="tissue specificity">
    <text evidence="6">Expressed by the venom duct.</text>
</comment>
<comment type="domain">
    <text evidence="5">The cysteine framework is I (CC-C-C). Alpha4/7 pattern.</text>
</comment>
<comment type="similarity">
    <text evidence="5">Belongs to the conotoxin A superfamily.</text>
</comment>
<name>CA1A1_CONLE</name>
<evidence type="ECO:0000250" key="1">
    <source>
        <dbReference type="UniProtKB" id="P56636"/>
    </source>
</evidence>
<evidence type="ECO:0000250" key="2">
    <source>
        <dbReference type="UniProtKB" id="Q2I2R8"/>
    </source>
</evidence>
<evidence type="ECO:0000250" key="3">
    <source>
        <dbReference type="UniProtKB" id="X1WB75"/>
    </source>
</evidence>
<evidence type="ECO:0000303" key="4">
    <source>
    </source>
</evidence>
<evidence type="ECO:0000305" key="5"/>
<evidence type="ECO:0000305" key="6">
    <source>
    </source>
</evidence>